<name>MGDG3_ARATH</name>
<reference key="1">
    <citation type="journal article" date="2001" name="Proc. Natl. Acad. Sci. U.S.A.">
        <title>Two types of MGDG synthase genes, found widely in both 16:3 and 18:3 plants, differentially mediate galactolipid syntheses in photosynthetic and nonphotosynthetic tissues in Arabidopsis thaliana.</title>
        <authorList>
            <person name="Awai K."/>
            <person name="Marechal E."/>
            <person name="Block M.A."/>
            <person name="Brun D."/>
            <person name="Masuda T."/>
            <person name="Shimada H."/>
            <person name="Takamiya K."/>
            <person name="Ohta H."/>
            <person name="Joyard J."/>
        </authorList>
    </citation>
    <scope>NUCLEOTIDE SEQUENCE [MRNA] (ISOFORM 1)</scope>
    <scope>FUNCTION</scope>
    <scope>CATALYTIC ACTIVITY</scope>
    <scope>TISSUE SPECIFICITY</scope>
    <scope>SUBCELLULAR LOCATION</scope>
    <scope>DEVELOPMENTAL STAGE</scope>
    <scope>INDUCTION</scope>
    <source>
        <strain>cv. Columbia</strain>
    </source>
</reference>
<reference key="2">
    <citation type="journal article" date="2014" name="Plant J.">
        <title>The plant glycosyltransferase clone collection for functional genomics.</title>
        <authorList>
            <person name="Lao J."/>
            <person name="Oikawa A."/>
            <person name="Bromley J.R."/>
            <person name="McInerney P."/>
            <person name="Suttangkakul A."/>
            <person name="Smith-Moritz A.M."/>
            <person name="Plahar H."/>
            <person name="Chiu T.-Y."/>
            <person name="Gonzalez Fernandez-Nino S.M.G."/>
            <person name="Ebert B."/>
            <person name="Yang F."/>
            <person name="Christiansen K.M."/>
            <person name="Hansen S.F."/>
            <person name="Stonebloom S."/>
            <person name="Adams P.D."/>
            <person name="Ronald P.C."/>
            <person name="Hillson N.J."/>
            <person name="Hadi M.Z."/>
            <person name="Vega-Sanchez M.E."/>
            <person name="Loque D."/>
            <person name="Scheller H.V."/>
            <person name="Heazlewood J.L."/>
        </authorList>
    </citation>
    <scope>NUCLEOTIDE SEQUENCE [MRNA]</scope>
</reference>
<reference key="3">
    <citation type="journal article" date="1999" name="Nature">
        <title>Sequence and analysis of chromosome 2 of the plant Arabidopsis thaliana.</title>
        <authorList>
            <person name="Lin X."/>
            <person name="Kaul S."/>
            <person name="Rounsley S.D."/>
            <person name="Shea T.P."/>
            <person name="Benito M.-I."/>
            <person name="Town C.D."/>
            <person name="Fujii C.Y."/>
            <person name="Mason T.M."/>
            <person name="Bowman C.L."/>
            <person name="Barnstead M.E."/>
            <person name="Feldblyum T.V."/>
            <person name="Buell C.R."/>
            <person name="Ketchum K.A."/>
            <person name="Lee J.J."/>
            <person name="Ronning C.M."/>
            <person name="Koo H.L."/>
            <person name="Moffat K.S."/>
            <person name="Cronin L.A."/>
            <person name="Shen M."/>
            <person name="Pai G."/>
            <person name="Van Aken S."/>
            <person name="Umayam L."/>
            <person name="Tallon L.J."/>
            <person name="Gill J.E."/>
            <person name="Adams M.D."/>
            <person name="Carrera A.J."/>
            <person name="Creasy T.H."/>
            <person name="Goodman H.M."/>
            <person name="Somerville C.R."/>
            <person name="Copenhaver G.P."/>
            <person name="Preuss D."/>
            <person name="Nierman W.C."/>
            <person name="White O."/>
            <person name="Eisen J.A."/>
            <person name="Salzberg S.L."/>
            <person name="Fraser C.M."/>
            <person name="Venter J.C."/>
        </authorList>
    </citation>
    <scope>NUCLEOTIDE SEQUENCE [LARGE SCALE GENOMIC DNA]</scope>
    <source>
        <strain>cv. Columbia</strain>
    </source>
</reference>
<reference key="4">
    <citation type="journal article" date="2017" name="Plant J.">
        <title>Araport11: a complete reannotation of the Arabidopsis thaliana reference genome.</title>
        <authorList>
            <person name="Cheng C.Y."/>
            <person name="Krishnakumar V."/>
            <person name="Chan A.P."/>
            <person name="Thibaud-Nissen F."/>
            <person name="Schobel S."/>
            <person name="Town C.D."/>
        </authorList>
    </citation>
    <scope>GENOME REANNOTATION</scope>
    <source>
        <strain>cv. Columbia</strain>
    </source>
</reference>
<reference key="5">
    <citation type="submission" date="2006-08" db="EMBL/GenBank/DDBJ databases">
        <title>Arabidopsis ORF clones.</title>
        <authorList>
            <person name="Quinitio C."/>
            <person name="Chen H."/>
            <person name="Kim C.J."/>
            <person name="Shinn P."/>
            <person name="Ecker J.R."/>
        </authorList>
    </citation>
    <scope>NUCLEOTIDE SEQUENCE [LARGE SCALE MRNA] (ISOFORM 1)</scope>
    <source>
        <strain>cv. Columbia</strain>
    </source>
</reference>
<reference key="6">
    <citation type="journal article" date="2004" name="Plant Physiol.">
        <title>Arabidopsis type B monogalactosyldiacylglycerol synthase genes are expressed during pollen tube growth and induced by phosphate starvation.</title>
        <authorList>
            <person name="Kobayashi K."/>
            <person name="Awai K."/>
            <person name="Takamiya K."/>
            <person name="Ohta H."/>
        </authorList>
    </citation>
    <scope>TISSUE SPECIFICITY</scope>
    <scope>INDUCTION</scope>
</reference>
<reference key="7">
    <citation type="journal article" date="2006" name="Plant J.">
        <title>Membrane lipid alteration during phosphate starvation is regulated by phosphate signaling and auxin/cytokinin cross-talk.</title>
        <authorList>
            <person name="Kobayashi K."/>
            <person name="Masuda T."/>
            <person name="Takamiya K."/>
            <person name="Ohta H."/>
        </authorList>
    </citation>
    <scope>INDUCTION</scope>
</reference>
<reference key="8">
    <citation type="journal article" date="2009" name="Plant J.">
        <title>Type-B monogalactosyldiacylglycerol synthases are involved in phosphate starvation-induced lipid remodeling, and are crucial for low-phosphate adaptation.</title>
        <authorList>
            <person name="Kobayashi K."/>
            <person name="Awai K."/>
            <person name="Nakamura M."/>
            <person name="Nagatani A."/>
            <person name="Masuda T."/>
            <person name="Ohta H."/>
        </authorList>
    </citation>
    <scope>FUNCTION</scope>
</reference>
<reference key="9">
    <citation type="journal article" date="2011" name="Nat. Chem. Biol.">
        <title>Chemical inhibitors of monogalactosyldiacylglycerol synthases in Arabidopsis thaliana.</title>
        <authorList>
            <person name="Botte C.Y."/>
            <person name="Deligny M."/>
            <person name="Roccia A."/>
            <person name="Bonneau A.L."/>
            <person name="Saidani N."/>
            <person name="Hardre H."/>
            <person name="Aci S."/>
            <person name="Yamaryo-Botte Y."/>
            <person name="Jouhet J."/>
            <person name="Dubots E."/>
            <person name="Loizeau K."/>
            <person name="Bastien O."/>
            <person name="Brehelin L."/>
            <person name="Joyard J."/>
            <person name="Cintrat J.C."/>
            <person name="Falconet D."/>
            <person name="Block M.A."/>
            <person name="Rousseau B."/>
            <person name="Lopez R."/>
            <person name="Marechal E."/>
        </authorList>
    </citation>
    <scope>ACTIVITY REGULATION</scope>
</reference>
<reference key="10">
    <citation type="journal article" date="2019" name="Plant Mol. Biol.">
        <title>Lipid remodeling under acidic conditions and its interplay with low Pi stress in Arabidopsis.</title>
        <authorList>
            <person name="Murakawa M."/>
            <person name="Ohta H."/>
            <person name="Shimojima M."/>
        </authorList>
    </citation>
    <scope>FUNCTION</scope>
    <scope>INDUCTION</scope>
</reference>
<organism>
    <name type="scientific">Arabidopsis thaliana</name>
    <name type="common">Mouse-ear cress</name>
    <dbReference type="NCBI Taxonomy" id="3702"/>
    <lineage>
        <taxon>Eukaryota</taxon>
        <taxon>Viridiplantae</taxon>
        <taxon>Streptophyta</taxon>
        <taxon>Embryophyta</taxon>
        <taxon>Tracheophyta</taxon>
        <taxon>Spermatophyta</taxon>
        <taxon>Magnoliopsida</taxon>
        <taxon>eudicotyledons</taxon>
        <taxon>Gunneridae</taxon>
        <taxon>Pentapetalae</taxon>
        <taxon>rosids</taxon>
        <taxon>malvids</taxon>
        <taxon>Brassicales</taxon>
        <taxon>Brassicaceae</taxon>
        <taxon>Camelineae</taxon>
        <taxon>Arabidopsis</taxon>
    </lineage>
</organism>
<proteinExistence type="evidence at protein level"/>
<comment type="function">
    <text evidence="3 6 8">Involved in the synthesis of monogalactosyldiacylglycerol, the major structural component of photosynthetic membranes and in the chloroplast envelope biogenesis. Can use both prokaryotic (18:1/16:0) or eukaryotic (18:2/18:2) 1,2-diacylglycerol species, but operates with some preference for the eukaryotic one. Plays a minor role in galactolipid synthesis in chloroplasts (PubMed:11553816). Is essential for membrane lipid remodeling in phosphate-starved roots (PubMed:18808455, PubMed:31201686). Acts as the major factor involved in digalactosyldiacylglycerol (DGDG) biosynthesis in phosphate-starved roots (PubMed:18808455). Does not seem to be required for plant growth under nutrient-sufficient conditions (PubMed:18808455). Required for membrane lipid remodeling in plants grown in acidic conditions (PubMed:31201686).</text>
</comment>
<comment type="catalytic activity">
    <reaction evidence="3">
        <text>a 1,2-diacyl-sn-glycerol + UDP-alpha-D-galactose = a 1,2-diacyl-3-O-(beta-D-galactosyl)-sn-glycerol + UDP + H(+)</text>
        <dbReference type="Rhea" id="RHEA:14945"/>
        <dbReference type="ChEBI" id="CHEBI:15378"/>
        <dbReference type="ChEBI" id="CHEBI:17615"/>
        <dbReference type="ChEBI" id="CHEBI:17815"/>
        <dbReference type="ChEBI" id="CHEBI:58223"/>
        <dbReference type="ChEBI" id="CHEBI:66914"/>
        <dbReference type="EC" id="2.4.1.46"/>
    </reaction>
    <physiologicalReaction direction="left-to-right" evidence="3">
        <dbReference type="Rhea" id="RHEA:14946"/>
    </physiologicalReaction>
</comment>
<comment type="catalytic activity">
    <reaction evidence="3">
        <text>1,2-di-(9Z,12Z-octadecadienoyl)-sn-glycerol + UDP-alpha-D-galactose = 1,2-di-(9Z,12Z-octadecadienoyl)-3-beta-D-galactosyl-sn-glycerol + UDP + H(+)</text>
        <dbReference type="Rhea" id="RHEA:48492"/>
        <dbReference type="ChEBI" id="CHEBI:15378"/>
        <dbReference type="ChEBI" id="CHEBI:58223"/>
        <dbReference type="ChEBI" id="CHEBI:66914"/>
        <dbReference type="ChEBI" id="CHEBI:77127"/>
        <dbReference type="ChEBI" id="CHEBI:90506"/>
    </reaction>
    <physiologicalReaction direction="left-to-right" evidence="3">
        <dbReference type="Rhea" id="RHEA:48493"/>
    </physiologicalReaction>
</comment>
<comment type="catalytic activity">
    <reaction evidence="3">
        <text>1-(9Z-octadecenoyl)-2-hexadecanoyl-sn-glycerol + UDP-alpha-D-galactose = 1-(9Z-octadecenoyl)-2-hexadecanoyl-3-beta-D-galactosyl-sn-glycerol + UDP + H(+)</text>
        <dbReference type="Rhea" id="RHEA:48496"/>
        <dbReference type="ChEBI" id="CHEBI:15378"/>
        <dbReference type="ChEBI" id="CHEBI:58223"/>
        <dbReference type="ChEBI" id="CHEBI:66914"/>
        <dbReference type="ChEBI" id="CHEBI:75447"/>
        <dbReference type="ChEBI" id="CHEBI:90507"/>
    </reaction>
    <physiologicalReaction direction="left-to-right" evidence="3">
        <dbReference type="Rhea" id="RHEA:48497"/>
    </physiologicalReaction>
</comment>
<comment type="catalytic activity">
    <reaction evidence="3">
        <text>1,2-di-(9Z-octadecenoyl)-sn-glycerol + UDP-alpha-D-galactose = 1,2-di-(9Z-octadecenoyl)-3-beta-D-galactosyl-sn-glycerol + UDP + H(+)</text>
        <dbReference type="Rhea" id="RHEA:48480"/>
        <dbReference type="ChEBI" id="CHEBI:15378"/>
        <dbReference type="ChEBI" id="CHEBI:52333"/>
        <dbReference type="ChEBI" id="CHEBI:58223"/>
        <dbReference type="ChEBI" id="CHEBI:63775"/>
        <dbReference type="ChEBI" id="CHEBI:66914"/>
    </reaction>
    <physiologicalReaction direction="left-to-right" evidence="3">
        <dbReference type="Rhea" id="RHEA:48481"/>
    </physiologicalReaction>
</comment>
<comment type="activity regulation">
    <text evidence="7">Inhibited by galvestine-1.</text>
</comment>
<comment type="biophysicochemical properties">
    <phDependence>
        <text>Optimum pH is 7.0.</text>
    </phDependence>
</comment>
<comment type="subcellular location">
    <subcellularLocation>
        <location evidence="11">Plastid</location>
        <location evidence="11">Chloroplast outer membrane</location>
    </subcellularLocation>
</comment>
<comment type="alternative products">
    <event type="alternative splicing"/>
    <isoform>
        <id>Q9SI93-1</id>
        <name>1</name>
        <sequence type="displayed"/>
    </isoform>
    <isoform>
        <id>Q9SI93-2</id>
        <name>2</name>
        <sequence type="described" ref="VSP_035389 VSP_035390"/>
    </isoform>
</comment>
<comment type="tissue specificity">
    <text evidence="3 4">Expressed mainly in roots. Detected in flowers, leaves, stems, siliques and pollen tubes.</text>
</comment>
<comment type="developmental stage">
    <text evidence="3">Mostly expressed in early stages of development.</text>
</comment>
<comment type="induction">
    <text evidence="3 4 5 8">Induced by phosphate deprivation (PubMed:11553816, PubMed:14730084, PubMed:16762032). Induced in rosette leaves when grown in acidic soil (PubMed:31201686).</text>
</comment>
<comment type="miscellaneous">
    <text>Auxin activates expression during Pi starvation, whereas cytokinin represses it.</text>
</comment>
<comment type="similarity">
    <text evidence="10">Belongs to the glycosyltransferase 28 family.</text>
</comment>
<evidence type="ECO:0000250" key="1">
    <source>
        <dbReference type="UniProtKB" id="O81770"/>
    </source>
</evidence>
<evidence type="ECO:0000255" key="2"/>
<evidence type="ECO:0000269" key="3">
    <source>
    </source>
</evidence>
<evidence type="ECO:0000269" key="4">
    <source>
    </source>
</evidence>
<evidence type="ECO:0000269" key="5">
    <source>
    </source>
</evidence>
<evidence type="ECO:0000269" key="6">
    <source>
    </source>
</evidence>
<evidence type="ECO:0000269" key="7">
    <source>
    </source>
</evidence>
<evidence type="ECO:0000269" key="8">
    <source>
    </source>
</evidence>
<evidence type="ECO:0000303" key="9">
    <source>
    </source>
</evidence>
<evidence type="ECO:0000305" key="10"/>
<evidence type="ECO:0000305" key="11">
    <source>
    </source>
</evidence>
<evidence type="ECO:0000312" key="12">
    <source>
        <dbReference type="Araport" id="AT2G11810"/>
    </source>
</evidence>
<evidence type="ECO:0000312" key="13">
    <source>
        <dbReference type="EMBL" id="AAD28678.2"/>
    </source>
</evidence>
<accession>Q9SI93</accession>
<accession>B3H4P3</accession>
<accession>Q9FZL5</accession>
<accession>W8PV29</accession>
<sequence length="465" mass="52990">MMKVVSPRTRSDSITEKVFRRVYSNFNISTVEDEYIHRQRSSDYEKESRLRKRGLEDKEEVMEMEQMGAERIKTVLILMSDTGGGHRASAEAIRDAFKIEFGDDYRIIIKDVWKEYTGWPLNDMERQYKFMVKHVGLWSVAFHGTSPKWIHKSYLSALAAYYAKEIEAGLMEYKPDIIISVHPLMQHIPLWVMKWQGLHKKVIFVTVITDLNTCHRTWFHHGVSRCYCPSKEVAKRALVDGLDDSQIRVFGLPVRPSFPRTILNKNELRKELEIDLNLPAVLLMGGGEGMGPVQKTALALGDSLYNSKESNPIGQLIVICGRNKVLASTLASHEWKIPVKVRGFETQMEKWMGACDCIITKAGPGTIAEALICGLPIILNDYIPGQEKGNVPYVVDNGAGVFTRSPKETAKIVADWFSNNKEELKKMSENALKLSQPEAVFDIVKDIHHLSQQQQRIPLFNEFSY</sequence>
<keyword id="KW-0025">Alternative splicing</keyword>
<keyword id="KW-0150">Chloroplast</keyword>
<keyword id="KW-0328">Glycosyltransferase</keyword>
<keyword id="KW-0472">Membrane</keyword>
<keyword id="KW-0934">Plastid</keyword>
<keyword id="KW-1002">Plastid outer membrane</keyword>
<keyword id="KW-1185">Reference proteome</keyword>
<keyword id="KW-0808">Transferase</keyword>
<keyword id="KW-0809">Transit peptide</keyword>
<dbReference type="EC" id="2.4.1.46" evidence="3"/>
<dbReference type="EMBL" id="AB047398">
    <property type="protein sequence ID" value="BAB12041.1"/>
    <property type="molecule type" value="mRNA"/>
</dbReference>
<dbReference type="EMBL" id="KJ138917">
    <property type="protein sequence ID" value="AHL38857.1"/>
    <property type="molecule type" value="mRNA"/>
</dbReference>
<dbReference type="EMBL" id="AC007187">
    <property type="protein sequence ID" value="AAD28678.2"/>
    <property type="molecule type" value="Genomic_DNA"/>
</dbReference>
<dbReference type="EMBL" id="CP002685">
    <property type="protein sequence ID" value="AEC06183.1"/>
    <property type="molecule type" value="Genomic_DNA"/>
</dbReference>
<dbReference type="EMBL" id="CP002685">
    <property type="protein sequence ID" value="AEC06184.1"/>
    <property type="molecule type" value="Genomic_DNA"/>
</dbReference>
<dbReference type="EMBL" id="BT026357">
    <property type="protein sequence ID" value="ABH04464.1"/>
    <property type="molecule type" value="mRNA"/>
</dbReference>
<dbReference type="PIR" id="C84499">
    <property type="entry name" value="C84499"/>
</dbReference>
<dbReference type="RefSeq" id="NP_001118301.1">
    <molecule id="Q9SI93-2"/>
    <property type="nucleotide sequence ID" value="NM_001124829.2"/>
</dbReference>
<dbReference type="RefSeq" id="NP_565352.1">
    <molecule id="Q9SI93-1"/>
    <property type="nucleotide sequence ID" value="NM_126865.5"/>
</dbReference>
<dbReference type="SMR" id="Q9SI93"/>
<dbReference type="BioGRID" id="1028">
    <property type="interactions" value="8"/>
</dbReference>
<dbReference type="FunCoup" id="Q9SI93">
    <property type="interactions" value="1"/>
</dbReference>
<dbReference type="IntAct" id="Q9SI93">
    <property type="interactions" value="2"/>
</dbReference>
<dbReference type="STRING" id="3702.Q9SI93"/>
<dbReference type="SwissLipids" id="SLP:000001446"/>
<dbReference type="CAZy" id="GT28">
    <property type="family name" value="Glycosyltransferase Family 28"/>
</dbReference>
<dbReference type="iPTMnet" id="Q9SI93"/>
<dbReference type="PaxDb" id="3702-AT2G11810.1"/>
<dbReference type="EnsemblPlants" id="AT2G11810.1">
    <molecule id="Q9SI93-1"/>
    <property type="protein sequence ID" value="AT2G11810.1"/>
    <property type="gene ID" value="AT2G11810"/>
</dbReference>
<dbReference type="EnsemblPlants" id="AT2G11810.2">
    <molecule id="Q9SI93-2"/>
    <property type="protein sequence ID" value="AT2G11810.2"/>
    <property type="gene ID" value="AT2G11810"/>
</dbReference>
<dbReference type="GeneID" id="815657"/>
<dbReference type="Gramene" id="AT2G11810.1">
    <molecule id="Q9SI93-1"/>
    <property type="protein sequence ID" value="AT2G11810.1"/>
    <property type="gene ID" value="AT2G11810"/>
</dbReference>
<dbReference type="Gramene" id="AT2G11810.2">
    <molecule id="Q9SI93-2"/>
    <property type="protein sequence ID" value="AT2G11810.2"/>
    <property type="gene ID" value="AT2G11810"/>
</dbReference>
<dbReference type="KEGG" id="ath:AT2G11810"/>
<dbReference type="Araport" id="AT2G11810"/>
<dbReference type="TAIR" id="AT2G11810">
    <property type="gene designation" value="MGDC"/>
</dbReference>
<dbReference type="eggNOG" id="ENOG502QPXV">
    <property type="taxonomic scope" value="Eukaryota"/>
</dbReference>
<dbReference type="HOGENOM" id="CLU_028367_3_1_1"/>
<dbReference type="InParanoid" id="Q9SI93"/>
<dbReference type="OMA" id="HITISRQ"/>
<dbReference type="PhylomeDB" id="Q9SI93"/>
<dbReference type="BioCyc" id="MetaCyc:AT2G11810-MONOMER"/>
<dbReference type="BRENDA" id="2.4.1.46">
    <property type="organism ID" value="399"/>
</dbReference>
<dbReference type="PRO" id="PR:Q9SI93"/>
<dbReference type="Proteomes" id="UP000006548">
    <property type="component" value="Chromosome 2"/>
</dbReference>
<dbReference type="ExpressionAtlas" id="Q9SI93">
    <property type="expression patterns" value="baseline and differential"/>
</dbReference>
<dbReference type="GO" id="GO:0009707">
    <property type="term" value="C:chloroplast outer membrane"/>
    <property type="evidence" value="ECO:0007669"/>
    <property type="project" value="UniProtKB-SubCell"/>
</dbReference>
<dbReference type="GO" id="GO:0046509">
    <property type="term" value="F:1,2-diacylglycerol 3-beta-galactosyltransferase activity"/>
    <property type="evidence" value="ECO:0007669"/>
    <property type="project" value="UniProtKB-EC"/>
</dbReference>
<dbReference type="GO" id="GO:0016036">
    <property type="term" value="P:cellular response to phosphate starvation"/>
    <property type="evidence" value="ECO:0000316"/>
    <property type="project" value="TAIR"/>
</dbReference>
<dbReference type="GO" id="GO:0006631">
    <property type="term" value="P:fatty acid metabolic process"/>
    <property type="evidence" value="ECO:0000315"/>
    <property type="project" value="TAIR"/>
</dbReference>
<dbReference type="GO" id="GO:0019374">
    <property type="term" value="P:galactolipid metabolic process"/>
    <property type="evidence" value="ECO:0000315"/>
    <property type="project" value="TAIR"/>
</dbReference>
<dbReference type="GO" id="GO:0009247">
    <property type="term" value="P:glycolipid biosynthetic process"/>
    <property type="evidence" value="ECO:0007669"/>
    <property type="project" value="InterPro"/>
</dbReference>
<dbReference type="CDD" id="cd17507">
    <property type="entry name" value="GT28_Beta-DGS-like"/>
    <property type="match status" value="1"/>
</dbReference>
<dbReference type="FunFam" id="3.40.50.2000:FF:000111">
    <property type="entry name" value="Monogalactosyldiacylglycerol synthase 3, chloroplastic"/>
    <property type="match status" value="1"/>
</dbReference>
<dbReference type="Gene3D" id="3.40.50.2000">
    <property type="entry name" value="Glycogen Phosphorylase B"/>
    <property type="match status" value="1"/>
</dbReference>
<dbReference type="InterPro" id="IPR009695">
    <property type="entry name" value="Diacylglyc_glucosyltr_N"/>
</dbReference>
<dbReference type="InterPro" id="IPR007235">
    <property type="entry name" value="Glyco_trans_28_C"/>
</dbReference>
<dbReference type="InterPro" id="IPR050519">
    <property type="entry name" value="Glycosyltransf_28_UgtP"/>
</dbReference>
<dbReference type="PANTHER" id="PTHR43025">
    <property type="entry name" value="MONOGALACTOSYLDIACYLGLYCEROL SYNTHASE"/>
    <property type="match status" value="1"/>
</dbReference>
<dbReference type="PANTHER" id="PTHR43025:SF6">
    <property type="entry name" value="MONOGALACTOSYLDIACYLGLYCEROL SYNTHASE 3, CHLOROPLASTIC"/>
    <property type="match status" value="1"/>
</dbReference>
<dbReference type="Pfam" id="PF04101">
    <property type="entry name" value="Glyco_tran_28_C"/>
    <property type="match status" value="1"/>
</dbReference>
<dbReference type="Pfam" id="PF06925">
    <property type="entry name" value="MGDG_synth"/>
    <property type="match status" value="1"/>
</dbReference>
<dbReference type="SUPFAM" id="SSF53756">
    <property type="entry name" value="UDP-Glycosyltransferase/glycogen phosphorylase"/>
    <property type="match status" value="1"/>
</dbReference>
<protein>
    <recommendedName>
        <fullName evidence="10">Monogalactosyldiacylglycerol synthase 3, chloroplastic</fullName>
        <shortName evidence="9">AtMGD3</shortName>
        <ecNumber evidence="3">2.4.1.46</ecNumber>
    </recommendedName>
    <alternativeName>
        <fullName evidence="10">MGDG synthase type C</fullName>
    </alternativeName>
</protein>
<feature type="transit peptide" description="Chloroplast" evidence="2">
    <location>
        <begin position="1"/>
        <end status="unknown"/>
    </location>
</feature>
<feature type="chain" id="PRO_0000349423" description="Monogalactosyldiacylglycerol synthase 3, chloroplastic">
    <location>
        <begin status="unknown"/>
        <end position="465"/>
    </location>
</feature>
<feature type="binding site" evidence="1">
    <location>
        <position position="86"/>
    </location>
    <ligand>
        <name>UDP</name>
        <dbReference type="ChEBI" id="CHEBI:58223"/>
    </ligand>
</feature>
<feature type="binding site" evidence="1">
    <location>
        <position position="255"/>
    </location>
    <ligand>
        <name>UDP</name>
        <dbReference type="ChEBI" id="CHEBI:58223"/>
    </ligand>
</feature>
<feature type="binding site" evidence="1">
    <location>
        <begin position="365"/>
        <end position="369"/>
    </location>
    <ligand>
        <name>UDP</name>
        <dbReference type="ChEBI" id="CHEBI:58223"/>
    </ligand>
</feature>
<feature type="binding site" evidence="1">
    <location>
        <position position="387"/>
    </location>
    <ligand>
        <name>UDP</name>
        <dbReference type="ChEBI" id="CHEBI:58223"/>
    </ligand>
</feature>
<feature type="splice variant" id="VSP_035389" description="In isoform 2." evidence="10">
    <original>A</original>
    <variation>H</variation>
    <location>
        <position position="362"/>
    </location>
</feature>
<feature type="splice variant" id="VSP_035390" description="In isoform 2." evidence="10">
    <location>
        <begin position="363"/>
        <end position="465"/>
    </location>
</feature>
<gene>
    <name evidence="9" type="primary">MGD3</name>
    <name evidence="10" type="synonym">MGDC</name>
    <name evidence="12" type="ordered locus">At2g11810</name>
    <name evidence="13" type="ORF">F7E22.4</name>
</gene>